<name>GPSB_STRPI</name>
<evidence type="ECO:0000255" key="1">
    <source>
        <dbReference type="HAMAP-Rule" id="MF_02011"/>
    </source>
</evidence>
<evidence type="ECO:0000256" key="2">
    <source>
        <dbReference type="SAM" id="MobiDB-lite"/>
    </source>
</evidence>
<organism>
    <name type="scientific">Streptococcus pneumoniae (strain Hungary19A-6)</name>
    <dbReference type="NCBI Taxonomy" id="487214"/>
    <lineage>
        <taxon>Bacteria</taxon>
        <taxon>Bacillati</taxon>
        <taxon>Bacillota</taxon>
        <taxon>Bacilli</taxon>
        <taxon>Lactobacillales</taxon>
        <taxon>Streptococcaceae</taxon>
        <taxon>Streptococcus</taxon>
    </lineage>
</organism>
<accession>B1I9H2</accession>
<keyword id="KW-0131">Cell cycle</keyword>
<keyword id="KW-0132">Cell division</keyword>
<keyword id="KW-0133">Cell shape</keyword>
<keyword id="KW-0175">Coiled coil</keyword>
<keyword id="KW-0963">Cytoplasm</keyword>
<gene>
    <name evidence="1" type="primary">gpsB</name>
    <name type="ordered locus">SPH_0479</name>
</gene>
<reference key="1">
    <citation type="journal article" date="2010" name="Genome Biol.">
        <title>Structure and dynamics of the pan-genome of Streptococcus pneumoniae and closely related species.</title>
        <authorList>
            <person name="Donati C."/>
            <person name="Hiller N.L."/>
            <person name="Tettelin H."/>
            <person name="Muzzi A."/>
            <person name="Croucher N.J."/>
            <person name="Angiuoli S.V."/>
            <person name="Oggioni M."/>
            <person name="Dunning Hotopp J.C."/>
            <person name="Hu F.Z."/>
            <person name="Riley D.R."/>
            <person name="Covacci A."/>
            <person name="Mitchell T.J."/>
            <person name="Bentley S.D."/>
            <person name="Kilian M."/>
            <person name="Ehrlich G.D."/>
            <person name="Rappuoli R."/>
            <person name="Moxon E.R."/>
            <person name="Masignani V."/>
        </authorList>
    </citation>
    <scope>NUCLEOTIDE SEQUENCE [LARGE SCALE GENOMIC DNA]</scope>
    <source>
        <strain>Hungary19A-6</strain>
    </source>
</reference>
<proteinExistence type="inferred from homology"/>
<protein>
    <recommendedName>
        <fullName evidence="1">Cell cycle protein GpsB</fullName>
    </recommendedName>
    <alternativeName>
        <fullName evidence="1">Guiding PBP1-shuttling protein</fullName>
    </alternativeName>
</protein>
<dbReference type="EMBL" id="CP000936">
    <property type="protein sequence ID" value="ACA36132.1"/>
    <property type="molecule type" value="Genomic_DNA"/>
</dbReference>
<dbReference type="RefSeq" id="WP_000094897.1">
    <property type="nucleotide sequence ID" value="NC_010380.1"/>
</dbReference>
<dbReference type="SMR" id="B1I9H2"/>
<dbReference type="KEGG" id="spv:SPH_0479"/>
<dbReference type="HOGENOM" id="CLU_140309_1_0_9"/>
<dbReference type="Proteomes" id="UP000002163">
    <property type="component" value="Chromosome"/>
</dbReference>
<dbReference type="GO" id="GO:0005737">
    <property type="term" value="C:cytoplasm"/>
    <property type="evidence" value="ECO:0007669"/>
    <property type="project" value="UniProtKB-SubCell"/>
</dbReference>
<dbReference type="GO" id="GO:0051301">
    <property type="term" value="P:cell division"/>
    <property type="evidence" value="ECO:0007669"/>
    <property type="project" value="UniProtKB-UniRule"/>
</dbReference>
<dbReference type="GO" id="GO:0008360">
    <property type="term" value="P:regulation of cell shape"/>
    <property type="evidence" value="ECO:0007669"/>
    <property type="project" value="UniProtKB-UniRule"/>
</dbReference>
<dbReference type="Gene3D" id="6.10.250.660">
    <property type="match status" value="1"/>
</dbReference>
<dbReference type="HAMAP" id="MF_02011">
    <property type="entry name" value="GpsB"/>
    <property type="match status" value="1"/>
</dbReference>
<dbReference type="InterPro" id="IPR011229">
    <property type="entry name" value="Cell_cycle_GpsB"/>
</dbReference>
<dbReference type="InterPro" id="IPR019933">
    <property type="entry name" value="DivIVA_domain"/>
</dbReference>
<dbReference type="InterPro" id="IPR007793">
    <property type="entry name" value="DivIVA_fam"/>
</dbReference>
<dbReference type="NCBIfam" id="TIGR03544">
    <property type="entry name" value="DivI1A_domain"/>
    <property type="match status" value="1"/>
</dbReference>
<dbReference type="NCBIfam" id="NF010725">
    <property type="entry name" value="PRK14127.1"/>
    <property type="match status" value="1"/>
</dbReference>
<dbReference type="PANTHER" id="PTHR35794:SF1">
    <property type="entry name" value="CELL CYCLE PROTEIN GPSB"/>
    <property type="match status" value="1"/>
</dbReference>
<dbReference type="PANTHER" id="PTHR35794">
    <property type="entry name" value="CELL DIVISION PROTEIN DIVIVA"/>
    <property type="match status" value="1"/>
</dbReference>
<dbReference type="Pfam" id="PF05103">
    <property type="entry name" value="DivIVA"/>
    <property type="match status" value="1"/>
</dbReference>
<dbReference type="PIRSF" id="PIRSF029938">
    <property type="entry name" value="UCP029938"/>
    <property type="match status" value="1"/>
</dbReference>
<feature type="chain" id="PRO_1000189499" description="Cell cycle protein GpsB">
    <location>
        <begin position="1"/>
        <end position="113"/>
    </location>
</feature>
<feature type="region of interest" description="Disordered" evidence="2">
    <location>
        <begin position="61"/>
        <end position="82"/>
    </location>
</feature>
<feature type="coiled-coil region" evidence="1">
    <location>
        <begin position="36"/>
        <end position="65"/>
    </location>
</feature>
<comment type="function">
    <text evidence="1">Divisome component that associates with the complex late in its assembly, after the Z-ring is formed, and is dependent on DivIC and PBP2B for its recruitment to the divisome. Together with EzrA, is a key component of the system that regulates PBP1 localization during cell cycle progression. Its main role could be the removal of PBP1 from the cell pole after pole maturation is completed. Also contributes to the recruitment of PBP1 to the division complex. Not essential for septum formation.</text>
</comment>
<comment type="subunit">
    <text evidence="1">Forms polymers through the coiled coil domains. Interacts with PBP1, MreC and EzrA.</text>
</comment>
<comment type="subcellular location">
    <subcellularLocation>
        <location evidence="1">Cytoplasm</location>
    </subcellularLocation>
    <text evidence="1">Shuttles between the lateral wall and the division site in a cell cycle-dependent manner.</text>
</comment>
<comment type="similarity">
    <text evidence="1">Belongs to the GpsB family.</text>
</comment>
<sequence length="113" mass="12821">MSSIIFSAKDIFEQEFGREVRGYSKVEVDEFLDDVIKDYETYAALVKSLRQEIADLKEELARKPQVSSAPSPSHPDPIDVAASSSMTNFDILKRLNRLEKEVFGKQILDNPDL</sequence>